<reference key="1">
    <citation type="journal article" date="2009" name="PLoS Biol.">
        <title>Lineage-specific biology revealed by a finished genome assembly of the mouse.</title>
        <authorList>
            <person name="Church D.M."/>
            <person name="Goodstadt L."/>
            <person name="Hillier L.W."/>
            <person name="Zody M.C."/>
            <person name="Goldstein S."/>
            <person name="She X."/>
            <person name="Bult C.J."/>
            <person name="Agarwala R."/>
            <person name="Cherry J.L."/>
            <person name="DiCuccio M."/>
            <person name="Hlavina W."/>
            <person name="Kapustin Y."/>
            <person name="Meric P."/>
            <person name="Maglott D."/>
            <person name="Birtle Z."/>
            <person name="Marques A.C."/>
            <person name="Graves T."/>
            <person name="Zhou S."/>
            <person name="Teague B."/>
            <person name="Potamousis K."/>
            <person name="Churas C."/>
            <person name="Place M."/>
            <person name="Herschleb J."/>
            <person name="Runnheim R."/>
            <person name="Forrest D."/>
            <person name="Amos-Landgraf J."/>
            <person name="Schwartz D.C."/>
            <person name="Cheng Z."/>
            <person name="Lindblad-Toh K."/>
            <person name="Eichler E.E."/>
            <person name="Ponting C.P."/>
        </authorList>
    </citation>
    <scope>NUCLEOTIDE SEQUENCE [LARGE SCALE GENOMIC DNA]</scope>
    <source>
        <strain>C57BL/6J</strain>
    </source>
</reference>
<reference key="2">
    <citation type="journal article" date="2005" name="Science">
        <title>The transcriptional landscape of the mammalian genome.</title>
        <authorList>
            <person name="Carninci P."/>
            <person name="Kasukawa T."/>
            <person name="Katayama S."/>
            <person name="Gough J."/>
            <person name="Frith M.C."/>
            <person name="Maeda N."/>
            <person name="Oyama R."/>
            <person name="Ravasi T."/>
            <person name="Lenhard B."/>
            <person name="Wells C."/>
            <person name="Kodzius R."/>
            <person name="Shimokawa K."/>
            <person name="Bajic V.B."/>
            <person name="Brenner S.E."/>
            <person name="Batalov S."/>
            <person name="Forrest A.R."/>
            <person name="Zavolan M."/>
            <person name="Davis M.J."/>
            <person name="Wilming L.G."/>
            <person name="Aidinis V."/>
            <person name="Allen J.E."/>
            <person name="Ambesi-Impiombato A."/>
            <person name="Apweiler R."/>
            <person name="Aturaliya R.N."/>
            <person name="Bailey T.L."/>
            <person name="Bansal M."/>
            <person name="Baxter L."/>
            <person name="Beisel K.W."/>
            <person name="Bersano T."/>
            <person name="Bono H."/>
            <person name="Chalk A.M."/>
            <person name="Chiu K.P."/>
            <person name="Choudhary V."/>
            <person name="Christoffels A."/>
            <person name="Clutterbuck D.R."/>
            <person name="Crowe M.L."/>
            <person name="Dalla E."/>
            <person name="Dalrymple B.P."/>
            <person name="de Bono B."/>
            <person name="Della Gatta G."/>
            <person name="di Bernardo D."/>
            <person name="Down T."/>
            <person name="Engstrom P."/>
            <person name="Fagiolini M."/>
            <person name="Faulkner G."/>
            <person name="Fletcher C.F."/>
            <person name="Fukushima T."/>
            <person name="Furuno M."/>
            <person name="Futaki S."/>
            <person name="Gariboldi M."/>
            <person name="Georgii-Hemming P."/>
            <person name="Gingeras T.R."/>
            <person name="Gojobori T."/>
            <person name="Green R.E."/>
            <person name="Gustincich S."/>
            <person name="Harbers M."/>
            <person name="Hayashi Y."/>
            <person name="Hensch T.K."/>
            <person name="Hirokawa N."/>
            <person name="Hill D."/>
            <person name="Huminiecki L."/>
            <person name="Iacono M."/>
            <person name="Ikeo K."/>
            <person name="Iwama A."/>
            <person name="Ishikawa T."/>
            <person name="Jakt M."/>
            <person name="Kanapin A."/>
            <person name="Katoh M."/>
            <person name="Kawasawa Y."/>
            <person name="Kelso J."/>
            <person name="Kitamura H."/>
            <person name="Kitano H."/>
            <person name="Kollias G."/>
            <person name="Krishnan S.P."/>
            <person name="Kruger A."/>
            <person name="Kummerfeld S.K."/>
            <person name="Kurochkin I.V."/>
            <person name="Lareau L.F."/>
            <person name="Lazarevic D."/>
            <person name="Lipovich L."/>
            <person name="Liu J."/>
            <person name="Liuni S."/>
            <person name="McWilliam S."/>
            <person name="Madan Babu M."/>
            <person name="Madera M."/>
            <person name="Marchionni L."/>
            <person name="Matsuda H."/>
            <person name="Matsuzawa S."/>
            <person name="Miki H."/>
            <person name="Mignone F."/>
            <person name="Miyake S."/>
            <person name="Morris K."/>
            <person name="Mottagui-Tabar S."/>
            <person name="Mulder N."/>
            <person name="Nakano N."/>
            <person name="Nakauchi H."/>
            <person name="Ng P."/>
            <person name="Nilsson R."/>
            <person name="Nishiguchi S."/>
            <person name="Nishikawa S."/>
            <person name="Nori F."/>
            <person name="Ohara O."/>
            <person name="Okazaki Y."/>
            <person name="Orlando V."/>
            <person name="Pang K.C."/>
            <person name="Pavan W.J."/>
            <person name="Pavesi G."/>
            <person name="Pesole G."/>
            <person name="Petrovsky N."/>
            <person name="Piazza S."/>
            <person name="Reed J."/>
            <person name="Reid J.F."/>
            <person name="Ring B.Z."/>
            <person name="Ringwald M."/>
            <person name="Rost B."/>
            <person name="Ruan Y."/>
            <person name="Salzberg S.L."/>
            <person name="Sandelin A."/>
            <person name="Schneider C."/>
            <person name="Schoenbach C."/>
            <person name="Sekiguchi K."/>
            <person name="Semple C.A."/>
            <person name="Seno S."/>
            <person name="Sessa L."/>
            <person name="Sheng Y."/>
            <person name="Shibata Y."/>
            <person name="Shimada H."/>
            <person name="Shimada K."/>
            <person name="Silva D."/>
            <person name="Sinclair B."/>
            <person name="Sperling S."/>
            <person name="Stupka E."/>
            <person name="Sugiura K."/>
            <person name="Sultana R."/>
            <person name="Takenaka Y."/>
            <person name="Taki K."/>
            <person name="Tammoja K."/>
            <person name="Tan S.L."/>
            <person name="Tang S."/>
            <person name="Taylor M.S."/>
            <person name="Tegner J."/>
            <person name="Teichmann S.A."/>
            <person name="Ueda H.R."/>
            <person name="van Nimwegen E."/>
            <person name="Verardo R."/>
            <person name="Wei C.L."/>
            <person name="Yagi K."/>
            <person name="Yamanishi H."/>
            <person name="Zabarovsky E."/>
            <person name="Zhu S."/>
            <person name="Zimmer A."/>
            <person name="Hide W."/>
            <person name="Bult C."/>
            <person name="Grimmond S.M."/>
            <person name="Teasdale R.D."/>
            <person name="Liu E.T."/>
            <person name="Brusic V."/>
            <person name="Quackenbush J."/>
            <person name="Wahlestedt C."/>
            <person name="Mattick J.S."/>
            <person name="Hume D.A."/>
            <person name="Kai C."/>
            <person name="Sasaki D."/>
            <person name="Tomaru Y."/>
            <person name="Fukuda S."/>
            <person name="Kanamori-Katayama M."/>
            <person name="Suzuki M."/>
            <person name="Aoki J."/>
            <person name="Arakawa T."/>
            <person name="Iida J."/>
            <person name="Imamura K."/>
            <person name="Itoh M."/>
            <person name="Kato T."/>
            <person name="Kawaji H."/>
            <person name="Kawagashira N."/>
            <person name="Kawashima T."/>
            <person name="Kojima M."/>
            <person name="Kondo S."/>
            <person name="Konno H."/>
            <person name="Nakano K."/>
            <person name="Ninomiya N."/>
            <person name="Nishio T."/>
            <person name="Okada M."/>
            <person name="Plessy C."/>
            <person name="Shibata K."/>
            <person name="Shiraki T."/>
            <person name="Suzuki S."/>
            <person name="Tagami M."/>
            <person name="Waki K."/>
            <person name="Watahiki A."/>
            <person name="Okamura-Oho Y."/>
            <person name="Suzuki H."/>
            <person name="Kawai J."/>
            <person name="Hayashizaki Y."/>
        </authorList>
    </citation>
    <scope>NUCLEOTIDE SEQUENCE [LARGE SCALE MRNA] OF 57-583 (ISOFORM 2)</scope>
    <source>
        <strain>C57BL/6J</strain>
        <tissue>Testis</tissue>
    </source>
</reference>
<reference key="3">
    <citation type="journal article" date="2016" name="Nat. Commun.">
        <title>Implementation of meiosis prophase I programme requires a conserved retinoid-independent stabilizer of meiotic transcripts.</title>
        <authorList>
            <person name="Abby E."/>
            <person name="Tourpin S."/>
            <person name="Ribeiro J."/>
            <person name="Daniel K."/>
            <person name="Messiaen S."/>
            <person name="Moison D."/>
            <person name="Guerquin J."/>
            <person name="Gaillard J.C."/>
            <person name="Armengaud J."/>
            <person name="Langa F."/>
            <person name="Toth A."/>
            <person name="Martini E."/>
            <person name="Livera G."/>
        </authorList>
    </citation>
    <scope>FUNCTION</scope>
    <scope>TISSUE SPECIFICITY</scope>
    <scope>DEVELOPMENTAL STAGE</scope>
    <scope>INTERACTION WITH YTHDC2</scope>
    <scope>DISRUPTION PHENOTYPE</scope>
</reference>
<reference key="4">
    <citation type="journal article" date="2017" name="PLoS Genet.">
        <title>Meioc maintains an extended meiotic prophase I in mice.</title>
        <authorList>
            <person name="Soh Y.Q.S."/>
            <person name="Mikedis M.M."/>
            <person name="Kojima M."/>
            <person name="Godfrey A.K."/>
            <person name="de Rooij D.G."/>
            <person name="Page D.C."/>
        </authorList>
    </citation>
    <scope>TISSUE SPECIFICITY</scope>
    <scope>SUBCELLULAR LOCATION</scope>
    <scope>DISRUPTION PHENOTYPE</scope>
    <scope>FUNCTION</scope>
    <scope>IDENTIFICATION BY MASS SPECTROMETRY</scope>
    <scope>INTERACTION WITH YTHDC2</scope>
</reference>
<reference key="5">
    <citation type="journal article" date="2017" name="Mol. Cell">
        <title>Regulation of m6A transcripts by the 3'-5' RNA helicase YTHDC2 is essential for a successful meiotic program in the mammalian germline.</title>
        <authorList>
            <person name="Wojtas M.N."/>
            <person name="Pandey R.R."/>
            <person name="Mendel M."/>
            <person name="Homolka D."/>
            <person name="Sachidanandam R."/>
            <person name="Pillai R.S."/>
        </authorList>
    </citation>
    <scope>INTERACTION WITH YTHDC2</scope>
</reference>
<reference key="6">
    <citation type="journal article" date="2022" name="Sci. Adv.">
        <title>RNA binding protein RBM46 regulates mitotic-to-meiotic transition in spermatogenesis.</title>
        <authorList>
            <person name="Qian B."/>
            <person name="Li Y."/>
            <person name="Yan R."/>
            <person name="Han S."/>
            <person name="Bu Z."/>
            <person name="Gong J."/>
            <person name="Zheng B."/>
            <person name="Yuan Z."/>
            <person name="Ren S."/>
            <person name="He Q."/>
            <person name="Zhang J."/>
            <person name="Xu C."/>
            <person name="Wang R."/>
            <person name="Sun Z."/>
            <person name="Lin M."/>
            <person name="Zhou J."/>
            <person name="Ye L."/>
        </authorList>
    </citation>
    <scope>INTERACTION WITH RBM46</scope>
</reference>
<accession>A2AG06</accession>
<accession>Q3V2K8</accession>
<name>MEIOC_MOUSE</name>
<comment type="function">
    <text evidence="2 3">Is required for meiosis completion in both male and female germ cells. Confers stability to numerous meiotic mRNAs in gonads allowing proper initiation and progression into meiosis prophase I. The function may involve YTHDC2 and is independent of induction by retinoic acid (RA). Maintains an extended meiotic prophase I by properly promoting the transition from a mitotic to a meiotic cell cycle program by binding transcripts through its interaction with YTHDC2 that regulate the mitotic cell cycle (PubMed:28380054).</text>
</comment>
<comment type="subunit">
    <text evidence="2 3 4 5">Interacts with YTHDC2; binds transcripts that regulate the mitotic cell cycle inhibiting progression into metaphase, thereby allowing meiotic prophase to proceed normally (PubMed:26742488, PubMed:28380054, PubMed:29033321). Interacts with RBM46 (PubMed:36001654).</text>
</comment>
<comment type="interaction">
    <interactant intactId="EBI-11664020">
        <id>A2AG06</id>
    </interactant>
    <interactant intactId="EBI-8572369">
        <id>B2RR83</id>
        <label>Ythdc2</label>
    </interactant>
    <organismsDiffer>false</organismsDiffer>
    <experiments>4</experiments>
</comment>
<comment type="interaction">
    <interactant intactId="EBI-11664020">
        <id>A2AG06</id>
    </interactant>
    <interactant intactId="EBI-1057466">
        <id>Q9H6S0</id>
        <label>YTHDC2</label>
    </interactant>
    <organismsDiffer>true</organismsDiffer>
    <experiments>2</experiments>
</comment>
<comment type="subcellular location">
    <subcellularLocation>
        <location evidence="2 3">Cytoplasm</location>
    </subcellularLocation>
    <subcellularLocation>
        <location evidence="3">Nucleus</location>
    </subcellularLocation>
    <text evidence="3">at late pachytene a fraction is nuclear.</text>
</comment>
<comment type="alternative products">
    <event type="alternative splicing"/>
    <isoform>
        <id>A2AG06-1</id>
        <name>1</name>
        <sequence type="displayed"/>
    </isoform>
    <isoform>
        <id>A2AG06-2</id>
        <name>2</name>
        <sequence type="described" ref="VSP_038974"/>
    </isoform>
</comment>
<comment type="tissue specificity">
    <text evidence="2 3">Expressed specifically in fetal ovary and postnatal and adult testes (at protein level) (PubMed:26742488). In adult testis expressed in spermatocytes, beginning in preleptotene and extending through most stages of meiotic prophase I, including leptotene, zygotene, and pachytene (PubMed:28380054).</text>
</comment>
<comment type="developmental stage">
    <text evidence="2 3">In the ovary appears at 13.5 dpc and disappears shortly after. In postnatal testes, expression increases between 5 and 10 dpp and is maintained through adulthood. In male and female germal cells present from preleptotene to diplotene stages of meiosis prophase I.</text>
</comment>
<comment type="disruption phenotype">
    <text evidence="2 3">Normal growth but mice are fully infertile with barely detectable ovaries and testes at adulthood. Complete absence of follicles in the ovaries and spermatozoon in the seminiferous tubules and epidymides. In testis, approximately 60% of the tubules contain spermatocytes arrested early in meiosis prophase I, the rest contains only spermatogonia. Testes completely lack postmeiotic germ cells, and are depleted for meiotic germ cells. In some individuals, germ cells does not progress past preleptotene, while in others, germ cells advanced to the zygotene stage of meiotic prophase (PubMed:28380054).</text>
</comment>
<protein>
    <recommendedName>
        <fullName evidence="8">Meiosis-specific coiled-coil domain-containing protein MEIOC</fullName>
    </recommendedName>
    <alternativeName>
        <fullName evidence="7 9">Meiosis-specific with coiled-coil domain protein</fullName>
    </alternativeName>
</protein>
<sequence length="965" mass="108830">MEVSGGDTCRPRHPQGLREGPEPKVAAAAAAFRGSANRCWNLSVDTSNRLSDVFNSMMLTGSAPFYDCYKSQNEDNVDLRQTCTPLSSSTEYASSIDSSLFYAPWSTYGDDIKQPPSSQISVKNRIQTERNDYGSETDLYGLVSNILEEQDKSQPYFAEGTCSSNLKSVWPMNTSRFVDHHDLLTEPKRPVDTSISQQAFYSGESVSAVEKQYLHNSSLTPQQKIDELYHGYTGLDLEEQWLYLSRSDHSNCYNSQANDTVKATFQEYPFVKNCFTPQTGLSDIMKESGIDTYAYGREKICTKGLETPLQHKRAEIFLSQFNRYNENADYCRYPEYAHPNKAKLNKCSNFSVQDGKKLANGTPETPTVEADAYTKLFQVKPANQKKMEETIPDQQNFAFPKTTPHLTEKQFAKEAAFTADFGLKSEYGLKPHTACPTNNDFANVSEKQQFAKPDPLNSEYFKSVNLFSNSATSSGGISLNRPTWMNVQTKNNLPIPYRNQGNLMKLNSHLSAASKGSNHSSDFPQLSSTNLTSNSNLFQKYCQENPSAFSSFDFSYNGAERIQSVNHMEGLTKTGEDNLFESVTEKKIKQPNGFCDSYSASQYGIIENVNKHNFQAKPQSGHYDPEDIPKHFDGLPQNTYQDLLESQGHFNSHRQGSGDNNINSRVNRTQASCFSNNYMMGDLRHNQGFQQLGSNGFPLRSTHPFGHSVVPLLDSYDLFSYDDLSHLYPYFNDMMYGDNSFSGFVPTFGFQRPIKTRSGPASELHIRLEECYEQWRALEKERKKTELALAKNYPGKKVSSTNNTPIPRLTSNPSRVDRLIVDELREQARVVTLLGKMERLRSSPLHANISTALDRHLESIHIVQSRRKDEIVNASNRQRQGVPRCQDDRDVFALATAIKEMCVATRKARTTLWCALQMTLPKTASTAGQADMEKAFQDLVNCEEKVHESINSSNPMNQRGETSKH</sequence>
<dbReference type="EMBL" id="AL672269">
    <property type="status" value="NOT_ANNOTATED_CDS"/>
    <property type="molecule type" value="Genomic_DNA"/>
</dbReference>
<dbReference type="EMBL" id="AK131737">
    <property type="protein sequence ID" value="BAE20789.1"/>
    <property type="molecule type" value="mRNA"/>
</dbReference>
<dbReference type="CCDS" id="CCDS48945.1">
    <molecule id="A2AG06-1"/>
</dbReference>
<dbReference type="RefSeq" id="NP_001121048.1">
    <molecule id="A2AG06-1"/>
    <property type="nucleotide sequence ID" value="NM_001127576.2"/>
</dbReference>
<dbReference type="SMR" id="A2AG06"/>
<dbReference type="BioGRID" id="234510">
    <property type="interactions" value="2"/>
</dbReference>
<dbReference type="FunCoup" id="A2AG06">
    <property type="interactions" value="1645"/>
</dbReference>
<dbReference type="IntAct" id="A2AG06">
    <property type="interactions" value="27"/>
</dbReference>
<dbReference type="STRING" id="10090.ENSMUSP00000097947"/>
<dbReference type="iPTMnet" id="A2AG06"/>
<dbReference type="PhosphoSitePlus" id="A2AG06"/>
<dbReference type="PaxDb" id="10090-ENSMUSP00000097947"/>
<dbReference type="ProteomicsDB" id="295874">
    <molecule id="A2AG06-1"/>
</dbReference>
<dbReference type="ProteomicsDB" id="295875">
    <molecule id="A2AG06-2"/>
</dbReference>
<dbReference type="Antibodypedia" id="17505">
    <property type="antibodies" value="35 antibodies from 15 providers"/>
</dbReference>
<dbReference type="Ensembl" id="ENSMUST00000100378.4">
    <molecule id="A2AG06-1"/>
    <property type="protein sequence ID" value="ENSMUSP00000097947.4"/>
    <property type="gene ID" value="ENSMUSG00000051455.14"/>
</dbReference>
<dbReference type="GeneID" id="268491"/>
<dbReference type="KEGG" id="mmu:268491"/>
<dbReference type="UCSC" id="uc011yfv.2">
    <molecule id="A2AG06-1"/>
    <property type="organism name" value="mouse"/>
</dbReference>
<dbReference type="AGR" id="MGI:2686410"/>
<dbReference type="CTD" id="284071"/>
<dbReference type="MGI" id="MGI:2686410">
    <property type="gene designation" value="Meioc"/>
</dbReference>
<dbReference type="VEuPathDB" id="HostDB:ENSMUSG00000051455"/>
<dbReference type="eggNOG" id="ENOG502QPMP">
    <property type="taxonomic scope" value="Eukaryota"/>
</dbReference>
<dbReference type="GeneTree" id="ENSGT00390000003267"/>
<dbReference type="HOGENOM" id="CLU_015343_0_0_1"/>
<dbReference type="InParanoid" id="A2AG06"/>
<dbReference type="OMA" id="TWMNIQT"/>
<dbReference type="OrthoDB" id="5978002at2759"/>
<dbReference type="PhylomeDB" id="A2AG06"/>
<dbReference type="TreeFam" id="TF313161"/>
<dbReference type="BioGRID-ORCS" id="268491">
    <property type="hits" value="7 hits in 76 CRISPR screens"/>
</dbReference>
<dbReference type="ChiTaRS" id="Meioc">
    <property type="organism name" value="mouse"/>
</dbReference>
<dbReference type="PRO" id="PR:A2AG06"/>
<dbReference type="Proteomes" id="UP000000589">
    <property type="component" value="Chromosome 11"/>
</dbReference>
<dbReference type="RNAct" id="A2AG06">
    <property type="molecule type" value="protein"/>
</dbReference>
<dbReference type="Bgee" id="ENSMUSG00000051455">
    <property type="expression patterns" value="Expressed in spermatocyte and 29 other cell types or tissues"/>
</dbReference>
<dbReference type="ExpressionAtlas" id="A2AG06">
    <property type="expression patterns" value="baseline and differential"/>
</dbReference>
<dbReference type="GO" id="GO:0005737">
    <property type="term" value="C:cytoplasm"/>
    <property type="evidence" value="ECO:0000314"/>
    <property type="project" value="UniProtKB"/>
</dbReference>
<dbReference type="GO" id="GO:0005634">
    <property type="term" value="C:nucleus"/>
    <property type="evidence" value="ECO:0000314"/>
    <property type="project" value="UniProtKB"/>
</dbReference>
<dbReference type="GO" id="GO:0070192">
    <property type="term" value="P:chromosome organization involved in meiotic cell cycle"/>
    <property type="evidence" value="ECO:0000315"/>
    <property type="project" value="UniProtKB"/>
</dbReference>
<dbReference type="GO" id="GO:0006302">
    <property type="term" value="P:double-strand break repair"/>
    <property type="evidence" value="ECO:0000315"/>
    <property type="project" value="UniProtKB"/>
</dbReference>
<dbReference type="GO" id="GO:0007144">
    <property type="term" value="P:female meiosis I"/>
    <property type="evidence" value="ECO:0000315"/>
    <property type="project" value="UniProtKB"/>
</dbReference>
<dbReference type="GO" id="GO:0051729">
    <property type="term" value="P:germline cell cycle switching, mitotic to meiotic cell cycle"/>
    <property type="evidence" value="ECO:0000315"/>
    <property type="project" value="UniProtKB"/>
</dbReference>
<dbReference type="GO" id="GO:0007141">
    <property type="term" value="P:male meiosis I"/>
    <property type="evidence" value="ECO:0000315"/>
    <property type="project" value="UniProtKB"/>
</dbReference>
<dbReference type="GO" id="GO:0051310">
    <property type="term" value="P:metaphase chromosome alignment"/>
    <property type="evidence" value="ECO:0000315"/>
    <property type="project" value="UniProtKB"/>
</dbReference>
<dbReference type="GO" id="GO:0048255">
    <property type="term" value="P:mRNA stabilization"/>
    <property type="evidence" value="ECO:0000315"/>
    <property type="project" value="UniProtKB"/>
</dbReference>
<dbReference type="GO" id="GO:0048599">
    <property type="term" value="P:oocyte development"/>
    <property type="evidence" value="ECO:0000315"/>
    <property type="project" value="UniProtKB"/>
</dbReference>
<dbReference type="GO" id="GO:0007286">
    <property type="term" value="P:spermatid development"/>
    <property type="evidence" value="ECO:0000315"/>
    <property type="project" value="UniProtKB"/>
</dbReference>
<dbReference type="GO" id="GO:0007283">
    <property type="term" value="P:spermatogenesis"/>
    <property type="evidence" value="ECO:0000315"/>
    <property type="project" value="UniProtKB"/>
</dbReference>
<dbReference type="GO" id="GO:0007130">
    <property type="term" value="P:synaptonemal complex assembly"/>
    <property type="evidence" value="ECO:0000315"/>
    <property type="project" value="UniProtKB"/>
</dbReference>
<dbReference type="InterPro" id="IPR027963">
    <property type="entry name" value="MEIOC"/>
</dbReference>
<dbReference type="PANTHER" id="PTHR33861:SF3">
    <property type="entry name" value="MEIOSIS-SPECIFIC COILED-COIL DOMAIN-CONTAINING PROTEIN MEIOC"/>
    <property type="match status" value="1"/>
</dbReference>
<dbReference type="PANTHER" id="PTHR33861">
    <property type="entry name" value="PROTEIN CBG18333"/>
    <property type="match status" value="1"/>
</dbReference>
<dbReference type="Pfam" id="PF15189">
    <property type="entry name" value="MEIOC"/>
    <property type="match status" value="1"/>
</dbReference>
<dbReference type="PROSITE" id="PS00012">
    <property type="entry name" value="PHOSPHOPANTETHEINE"/>
    <property type="match status" value="1"/>
</dbReference>
<evidence type="ECO:0000256" key="1">
    <source>
        <dbReference type="SAM" id="MobiDB-lite"/>
    </source>
</evidence>
<evidence type="ECO:0000269" key="2">
    <source>
    </source>
</evidence>
<evidence type="ECO:0000269" key="3">
    <source>
    </source>
</evidence>
<evidence type="ECO:0000269" key="4">
    <source>
    </source>
</evidence>
<evidence type="ECO:0000269" key="5">
    <source>
    </source>
</evidence>
<evidence type="ECO:0000303" key="6">
    <source>
    </source>
</evidence>
<evidence type="ECO:0000303" key="7">
    <source>
    </source>
</evidence>
<evidence type="ECO:0000305" key="8"/>
<evidence type="ECO:0000312" key="9">
    <source>
        <dbReference type="MGI" id="MGI:2686410"/>
    </source>
</evidence>
<gene>
    <name evidence="9" type="primary">Meioc</name>
    <name type="synonym">Gm1564</name>
</gene>
<proteinExistence type="evidence at protein level"/>
<keyword id="KW-0025">Alternative splicing</keyword>
<keyword id="KW-0963">Cytoplasm</keyword>
<keyword id="KW-0469">Meiosis</keyword>
<keyword id="KW-0539">Nucleus</keyword>
<keyword id="KW-1185">Reference proteome</keyword>
<feature type="chain" id="PRO_0000393412" description="Meiosis-specific coiled-coil domain-containing protein MEIOC">
    <location>
        <begin position="1"/>
        <end position="965"/>
    </location>
</feature>
<feature type="region of interest" description="Disordered" evidence="1">
    <location>
        <begin position="1"/>
        <end position="22"/>
    </location>
</feature>
<feature type="region of interest" description="Disordered" evidence="1">
    <location>
        <begin position="946"/>
        <end position="965"/>
    </location>
</feature>
<feature type="compositionally biased region" description="Polar residues" evidence="1">
    <location>
        <begin position="949"/>
        <end position="965"/>
    </location>
</feature>
<feature type="splice variant" id="VSP_038974" description="In isoform 2." evidence="6">
    <location>
        <begin position="1"/>
        <end position="56"/>
    </location>
</feature>
<organism>
    <name type="scientific">Mus musculus</name>
    <name type="common">Mouse</name>
    <dbReference type="NCBI Taxonomy" id="10090"/>
    <lineage>
        <taxon>Eukaryota</taxon>
        <taxon>Metazoa</taxon>
        <taxon>Chordata</taxon>
        <taxon>Craniata</taxon>
        <taxon>Vertebrata</taxon>
        <taxon>Euteleostomi</taxon>
        <taxon>Mammalia</taxon>
        <taxon>Eutheria</taxon>
        <taxon>Euarchontoglires</taxon>
        <taxon>Glires</taxon>
        <taxon>Rodentia</taxon>
        <taxon>Myomorpha</taxon>
        <taxon>Muroidea</taxon>
        <taxon>Muridae</taxon>
        <taxon>Murinae</taxon>
        <taxon>Mus</taxon>
        <taxon>Mus</taxon>
    </lineage>
</organism>